<organism>
    <name type="scientific">Arabidopsis thaliana</name>
    <name type="common">Mouse-ear cress</name>
    <dbReference type="NCBI Taxonomy" id="3702"/>
    <lineage>
        <taxon>Eukaryota</taxon>
        <taxon>Viridiplantae</taxon>
        <taxon>Streptophyta</taxon>
        <taxon>Embryophyta</taxon>
        <taxon>Tracheophyta</taxon>
        <taxon>Spermatophyta</taxon>
        <taxon>Magnoliopsida</taxon>
        <taxon>eudicotyledons</taxon>
        <taxon>Gunneridae</taxon>
        <taxon>Pentapetalae</taxon>
        <taxon>rosids</taxon>
        <taxon>malvids</taxon>
        <taxon>Brassicales</taxon>
        <taxon>Brassicaceae</taxon>
        <taxon>Camelineae</taxon>
        <taxon>Arabidopsis</taxon>
    </lineage>
</organism>
<dbReference type="EC" id="1.14.-.-"/>
<dbReference type="EMBL" id="AB024038">
    <property type="protein sequence ID" value="BAB02435.1"/>
    <property type="molecule type" value="Genomic_DNA"/>
</dbReference>
<dbReference type="EMBL" id="CP002686">
    <property type="protein sequence ID" value="AEE77127.1"/>
    <property type="molecule type" value="Genomic_DNA"/>
</dbReference>
<dbReference type="RefSeq" id="NP_189246.1">
    <property type="nucleotide sequence ID" value="NM_113522.1"/>
</dbReference>
<dbReference type="SMR" id="Q9LTM7"/>
<dbReference type="FunCoup" id="Q9LTM7">
    <property type="interactions" value="220"/>
</dbReference>
<dbReference type="STRING" id="3702.Q9LTM7"/>
<dbReference type="PaxDb" id="3702-AT3G26150.1"/>
<dbReference type="ProteomicsDB" id="239137"/>
<dbReference type="EnsemblPlants" id="AT3G26150.1">
    <property type="protein sequence ID" value="AT3G26150.1"/>
    <property type="gene ID" value="AT3G26150"/>
</dbReference>
<dbReference type="GeneID" id="822215"/>
<dbReference type="Gramene" id="AT3G26150.1">
    <property type="protein sequence ID" value="AT3G26150.1"/>
    <property type="gene ID" value="AT3G26150"/>
</dbReference>
<dbReference type="KEGG" id="ath:AT3G26150"/>
<dbReference type="Araport" id="AT3G26150"/>
<dbReference type="TAIR" id="AT3G26150">
    <property type="gene designation" value="CYP71B16"/>
</dbReference>
<dbReference type="eggNOG" id="KOG0156">
    <property type="taxonomic scope" value="Eukaryota"/>
</dbReference>
<dbReference type="HOGENOM" id="CLU_001570_4_1_1"/>
<dbReference type="InParanoid" id="Q9LTM7"/>
<dbReference type="OMA" id="ITIIWAM"/>
<dbReference type="PhylomeDB" id="Q9LTM7"/>
<dbReference type="BioCyc" id="ARA:AT3G26150-MONOMER"/>
<dbReference type="PRO" id="PR:Q9LTM7"/>
<dbReference type="Proteomes" id="UP000006548">
    <property type="component" value="Chromosome 3"/>
</dbReference>
<dbReference type="ExpressionAtlas" id="Q9LTM7">
    <property type="expression patterns" value="baseline and differential"/>
</dbReference>
<dbReference type="GO" id="GO:0016020">
    <property type="term" value="C:membrane"/>
    <property type="evidence" value="ECO:0007669"/>
    <property type="project" value="UniProtKB-SubCell"/>
</dbReference>
<dbReference type="GO" id="GO:0020037">
    <property type="term" value="F:heme binding"/>
    <property type="evidence" value="ECO:0007669"/>
    <property type="project" value="InterPro"/>
</dbReference>
<dbReference type="GO" id="GO:0005506">
    <property type="term" value="F:iron ion binding"/>
    <property type="evidence" value="ECO:0007669"/>
    <property type="project" value="InterPro"/>
</dbReference>
<dbReference type="GO" id="GO:0004497">
    <property type="term" value="F:monooxygenase activity"/>
    <property type="evidence" value="ECO:0007669"/>
    <property type="project" value="UniProtKB-KW"/>
</dbReference>
<dbReference type="GO" id="GO:0016705">
    <property type="term" value="F:oxidoreductase activity, acting on paired donors, with incorporation or reduction of molecular oxygen"/>
    <property type="evidence" value="ECO:0007669"/>
    <property type="project" value="InterPro"/>
</dbReference>
<dbReference type="CDD" id="cd11072">
    <property type="entry name" value="CYP71-like"/>
    <property type="match status" value="1"/>
</dbReference>
<dbReference type="FunFam" id="1.10.630.10:FF:000011">
    <property type="entry name" value="Cytochrome P450 83B1"/>
    <property type="match status" value="1"/>
</dbReference>
<dbReference type="Gene3D" id="1.10.630.10">
    <property type="entry name" value="Cytochrome P450"/>
    <property type="match status" value="1"/>
</dbReference>
<dbReference type="InterPro" id="IPR001128">
    <property type="entry name" value="Cyt_P450"/>
</dbReference>
<dbReference type="InterPro" id="IPR017972">
    <property type="entry name" value="Cyt_P450_CS"/>
</dbReference>
<dbReference type="InterPro" id="IPR002401">
    <property type="entry name" value="Cyt_P450_E_grp-I"/>
</dbReference>
<dbReference type="InterPro" id="IPR036396">
    <property type="entry name" value="Cyt_P450_sf"/>
</dbReference>
<dbReference type="InterPro" id="IPR050193">
    <property type="entry name" value="Cytochrome_P450_71"/>
</dbReference>
<dbReference type="PANTHER" id="PTHR47956">
    <property type="entry name" value="CYTOCHROME P450 71B11-RELATED"/>
    <property type="match status" value="1"/>
</dbReference>
<dbReference type="PANTHER" id="PTHR47956:SF119">
    <property type="entry name" value="CYTOCHROME P450 71B16-RELATED"/>
    <property type="match status" value="1"/>
</dbReference>
<dbReference type="Pfam" id="PF00067">
    <property type="entry name" value="p450"/>
    <property type="match status" value="1"/>
</dbReference>
<dbReference type="PRINTS" id="PR00463">
    <property type="entry name" value="EP450I"/>
</dbReference>
<dbReference type="PRINTS" id="PR00385">
    <property type="entry name" value="P450"/>
</dbReference>
<dbReference type="SUPFAM" id="SSF48264">
    <property type="entry name" value="Cytochrome P450"/>
    <property type="match status" value="1"/>
</dbReference>
<dbReference type="PROSITE" id="PS00086">
    <property type="entry name" value="CYTOCHROME_P450"/>
    <property type="match status" value="1"/>
</dbReference>
<sequence>MAISLLCLFLITLVSLIFVVKKIKHSKWDLPPSPPTFPVIGNLHQVGELPHRSFQRLAERTGHVMLLHFGFVPVTVISSREAAEEVLRTHDLKCCTRPKLVGSRLISRGFKDISFTPYGEEWRERRKFLVRELFCFKKVQYFGYIVEEECNLLVKKLTESAVGRPPVDLSKSLFWLAASILFRIAFGQSFHDNKFIDEDKIDELIFETETAQASFTCSDFFPIAGLGWLADWISGKHRWLNNVFFKLDALFQRVIDDHSDPGRWKDHKDIVDVMLDVMHKQGKDDSLRLTIDHIKGFLTNIIIAGIDTGALTMIWAMTELARNPELMKNVQGEIRDSFGNNKERITKEDLNKVPFLNMVIKETFRLHPVAPLLLPRETMTHIKVQGYDIPPKRRILVNTWAIGRDPTLWINPEEFNPERFINNPVDYRGQHFELLPFGSGRRICPGMGLGITIVELGLLNLLYFFDWRAPDGMTHKDIDTEEAGILTVVKKVPLKLVPVRVQ</sequence>
<protein>
    <recommendedName>
        <fullName>Cytochrome P450 71B16</fullName>
        <ecNumber>1.14.-.-</ecNumber>
    </recommendedName>
</protein>
<keyword id="KW-0349">Heme</keyword>
<keyword id="KW-0408">Iron</keyword>
<keyword id="KW-0472">Membrane</keyword>
<keyword id="KW-0479">Metal-binding</keyword>
<keyword id="KW-0503">Monooxygenase</keyword>
<keyword id="KW-0560">Oxidoreductase</keyword>
<keyword id="KW-1185">Reference proteome</keyword>
<keyword id="KW-0812">Transmembrane</keyword>
<keyword id="KW-1133">Transmembrane helix</keyword>
<accession>Q9LTM7</accession>
<proteinExistence type="inferred from homology"/>
<name>C71BG_ARATH</name>
<reference key="1">
    <citation type="journal article" date="2000" name="DNA Res.">
        <title>Structural analysis of Arabidopsis thaliana chromosome 3. I. Sequence features of the regions of 4,504,864 bp covered by sixty P1 and TAC clones.</title>
        <authorList>
            <person name="Sato S."/>
            <person name="Nakamura Y."/>
            <person name="Kaneko T."/>
            <person name="Katoh T."/>
            <person name="Asamizu E."/>
            <person name="Tabata S."/>
        </authorList>
    </citation>
    <scope>NUCLEOTIDE SEQUENCE [LARGE SCALE GENOMIC DNA]</scope>
    <source>
        <strain>cv. Columbia</strain>
    </source>
</reference>
<reference key="2">
    <citation type="journal article" date="2017" name="Plant J.">
        <title>Araport11: a complete reannotation of the Arabidopsis thaliana reference genome.</title>
        <authorList>
            <person name="Cheng C.Y."/>
            <person name="Krishnakumar V."/>
            <person name="Chan A.P."/>
            <person name="Thibaud-Nissen F."/>
            <person name="Schobel S."/>
            <person name="Town C.D."/>
        </authorList>
    </citation>
    <scope>GENOME REANNOTATION</scope>
    <source>
        <strain>cv. Columbia</strain>
    </source>
</reference>
<gene>
    <name type="primary">CYP71B16</name>
    <name type="ordered locus">At3g26150</name>
    <name type="ORF">MTC11.5</name>
</gene>
<comment type="cofactor">
    <cofactor evidence="1">
        <name>heme</name>
        <dbReference type="ChEBI" id="CHEBI:30413"/>
    </cofactor>
</comment>
<comment type="subcellular location">
    <subcellularLocation>
        <location evidence="3">Membrane</location>
        <topology evidence="3">Single-pass membrane protein</topology>
    </subcellularLocation>
</comment>
<comment type="similarity">
    <text evidence="3">Belongs to the cytochrome P450 family.</text>
</comment>
<feature type="chain" id="PRO_0000052094" description="Cytochrome P450 71B16">
    <location>
        <begin position="1"/>
        <end position="502"/>
    </location>
</feature>
<feature type="transmembrane region" description="Helical" evidence="2">
    <location>
        <begin position="1"/>
        <end position="21"/>
    </location>
</feature>
<feature type="binding site" description="axial binding residue" evidence="1">
    <location>
        <position position="444"/>
    </location>
    <ligand>
        <name>heme</name>
        <dbReference type="ChEBI" id="CHEBI:30413"/>
    </ligand>
    <ligandPart>
        <name>Fe</name>
        <dbReference type="ChEBI" id="CHEBI:18248"/>
    </ligandPart>
</feature>
<evidence type="ECO:0000250" key="1"/>
<evidence type="ECO:0000255" key="2"/>
<evidence type="ECO:0000305" key="3"/>